<dbReference type="EMBL" id="M29982">
    <property type="protein sequence ID" value="AAA16373.1"/>
    <property type="molecule type" value="Genomic_DNA"/>
</dbReference>
<dbReference type="PIR" id="A44769">
    <property type="entry name" value="A44769"/>
</dbReference>
<dbReference type="RefSeq" id="WP_012262116.1">
    <property type="nucleotide sequence ID" value="NZ_JAOXFD010000022.1"/>
</dbReference>
<dbReference type="SMR" id="P19423"/>
<dbReference type="GO" id="GO:0005886">
    <property type="term" value="C:plasma membrane"/>
    <property type="evidence" value="ECO:0007669"/>
    <property type="project" value="UniProtKB-SubCell"/>
</dbReference>
<dbReference type="Gene3D" id="1.25.40.20">
    <property type="entry name" value="Ankyrin repeat-containing domain"/>
    <property type="match status" value="1"/>
</dbReference>
<dbReference type="InterPro" id="IPR036770">
    <property type="entry name" value="Ankyrin_rpt-contain_sf"/>
</dbReference>
<dbReference type="SUPFAM" id="SSF48403">
    <property type="entry name" value="Ankyrin repeat"/>
    <property type="match status" value="1"/>
</dbReference>
<dbReference type="PROSITE" id="PS50297">
    <property type="entry name" value="ANK_REP_REGION"/>
    <property type="match status" value="1"/>
</dbReference>
<evidence type="ECO:0000255" key="1"/>
<evidence type="ECO:0000305" key="2"/>
<accession>P19423</accession>
<reference key="1">
    <citation type="journal article" date="1990" name="J. Gen. Microbiol.">
        <title>Characterization and expression of the cbbE' gene of Coxiella burnetii.</title>
        <authorList>
            <person name="Minnick M.F."/>
            <person name="Heinzen R.A."/>
            <person name="Frazier M.E."/>
            <person name="Mallavia L.P."/>
        </authorList>
    </citation>
    <scope>NUCLEOTIDE SEQUENCE [GENOMIC DNA]</scope>
</reference>
<sequence>MPKKLVPKDYEYIHLDLTTGEINFTSFNSLEELQASLKEGQIFFHKSVIFEEKPESGEIYSPKLISQIYRKEQELFEIREKSKGHPLPVTKKLLKRGQGTIVCCGIYTKELLKNVAEKGQYDTQCDDLNLGIFHVRAHKPLGIAQRLVHLPLPEDASSAAVATENLFGLIRFILVNDPAKKKIYLPISCFAIEKRIEQEHIIGYSQKDSLALSQRAYYEYKKDGTLIGLVALIGVDVKIDGKLGFLYHPVWREKQWALKFNEKMFYCAVSRAEKEKVFKPPYYLEPTAIIVDVTETPVKRLKNTSEDYLWLEVSQISAKFSLFCAQNNLKLEKADSKNKSPFVALSMESISELTGEQKRAFVKILNIPGIIFSSSTLAKARLESKLQYIGPALIEAAADGNFTDVVDIINRIEPLYDYKEILKEALKTQRLGTGNTPLQEAIKGQHTSLVKYFSSLSASLKVINHKNHQGLTALNFATAIGSSPAIVQELEWCSQ</sequence>
<comment type="subcellular location">
    <subcellularLocation>
        <location evidence="2">Cell membrane</location>
        <topology evidence="2">Single-pass membrane protein</topology>
    </subcellularLocation>
</comment>
<gene>
    <name type="primary">cbbE'</name>
</gene>
<organism>
    <name type="scientific">Coxiella burnetii</name>
    <dbReference type="NCBI Taxonomy" id="777"/>
    <lineage>
        <taxon>Bacteria</taxon>
        <taxon>Pseudomonadati</taxon>
        <taxon>Pseudomonadota</taxon>
        <taxon>Gammaproteobacteria</taxon>
        <taxon>Legionellales</taxon>
        <taxon>Coxiellaceae</taxon>
        <taxon>Coxiella</taxon>
    </lineage>
</organism>
<feature type="chain" id="PRO_0000089368" description="Surface E' protein">
    <location>
        <begin position="1"/>
        <end position="495"/>
    </location>
</feature>
<feature type="transmembrane region" description="Helical" evidence="1">
    <location>
        <begin position="224"/>
        <end position="235"/>
    </location>
</feature>
<geneLocation type="plasmid">
    <name>QpRS</name>
</geneLocation>
<name>CBEP_COXBE</name>
<proteinExistence type="predicted"/>
<protein>
    <recommendedName>
        <fullName>Surface E' protein</fullName>
    </recommendedName>
</protein>
<keyword id="KW-1003">Cell membrane</keyword>
<keyword id="KW-0472">Membrane</keyword>
<keyword id="KW-0614">Plasmid</keyword>
<keyword id="KW-0812">Transmembrane</keyword>
<keyword id="KW-1133">Transmembrane helix</keyword>